<sequence length="254" mass="27936">MDPAASSCMRSLQPPAPVWGCLRNPHSEGNGASGLPHYPPTPFSFHXXPDFPATATAAYPDFSASCLAATPHSLPQEEHIFTEQHPAFPQSPNWHFPVSXARRRPNSGPAGGSKEMGTSSLGLVDTTGGPGEDYGVLGSTANXXEKKSSRRRKESSDNQENRGKPEGSSKARKERTAFTKEQLRELEAEFAHHNYLTRLRRYEIAVNLDLSERQVKVWFQNRRMKWKRVKGGQPVSPNGQDPEDGDSTASPSSE</sequence>
<organism>
    <name type="scientific">Pan troglodytes</name>
    <name type="common">Chimpanzee</name>
    <dbReference type="NCBI Taxonomy" id="9598"/>
    <lineage>
        <taxon>Eukaryota</taxon>
        <taxon>Metazoa</taxon>
        <taxon>Chordata</taxon>
        <taxon>Craniata</taxon>
        <taxon>Vertebrata</taxon>
        <taxon>Euteleostomi</taxon>
        <taxon>Mammalia</taxon>
        <taxon>Eutheria</taxon>
        <taxon>Euarchontoglires</taxon>
        <taxon>Primates</taxon>
        <taxon>Haplorrhini</taxon>
        <taxon>Catarrhini</taxon>
        <taxon>Hominidae</taxon>
        <taxon>Pan</taxon>
    </lineage>
</organism>
<feature type="chain" id="PRO_0000285456" description="Homeobox protein MOX-1">
    <location>
        <begin position="1"/>
        <end position="254"/>
    </location>
</feature>
<feature type="DNA-binding region" description="Homeobox" evidence="3">
    <location>
        <begin position="171"/>
        <end position="230"/>
    </location>
</feature>
<feature type="region of interest" description="Disordered" evidence="4">
    <location>
        <begin position="86"/>
        <end position="178"/>
    </location>
</feature>
<feature type="region of interest" description="Disordered" evidence="4">
    <location>
        <begin position="226"/>
        <end position="254"/>
    </location>
</feature>
<feature type="compositionally biased region" description="Basic and acidic residues" evidence="4">
    <location>
        <begin position="154"/>
        <end position="178"/>
    </location>
</feature>
<protein>
    <recommendedName>
        <fullName>Homeobox protein MOX-1</fullName>
    </recommendedName>
    <alternativeName>
        <fullName>Mesenchyme homeobox 1</fullName>
    </alternativeName>
</protein>
<comment type="function">
    <text evidence="1 2">Mesodermal transcription factor that plays a key role in somitogenesis and is specifically required for sclerotome development. Required for maintenance of the sclerotome polarity and formation of the cranio-cervical joints. Binds specifically to the promoter of target genes and regulates their expression. Activates expression of NKX3-2 in the sclerotome. Activates expression of CDKN1A and CDKN2A in endothelial cells, acting as a regulator of vascular cell proliferation. While it activates CDKN1A in a DNA-dependent manner, it activates CDKN2A in a DNA-independent manner. Required for hematopoietic stem cell (HSCs) induction via its role in somitogenesis: specification of HSCs occurs via the deployment of a specific endothelial precursor population, which arises within a sub-compartment of the somite named endotome.</text>
</comment>
<comment type="subcellular location">
    <subcellularLocation>
        <location evidence="2">Nucleus</location>
    </subcellularLocation>
    <subcellularLocation>
        <location evidence="2">Cytoplasm</location>
    </subcellularLocation>
    <text evidence="2">Localizes predominantly in the nucleus.</text>
</comment>
<evidence type="ECO:0000250" key="1">
    <source>
        <dbReference type="UniProtKB" id="F1Q4R9"/>
    </source>
</evidence>
<evidence type="ECO:0000250" key="2">
    <source>
        <dbReference type="UniProtKB" id="P32442"/>
    </source>
</evidence>
<evidence type="ECO:0000255" key="3">
    <source>
        <dbReference type="PROSITE-ProRule" id="PRU00108"/>
    </source>
</evidence>
<evidence type="ECO:0000256" key="4">
    <source>
        <dbReference type="SAM" id="MobiDB-lite"/>
    </source>
</evidence>
<gene>
    <name type="primary">MEOX1</name>
</gene>
<accession>A2T779</accession>
<reference key="1">
    <citation type="submission" date="2006-08" db="EMBL/GenBank/DDBJ databases">
        <title>Positive selection in transcription factor genes on the human lineage.</title>
        <authorList>
            <person name="Nickel G.C."/>
            <person name="Tefft D.L."/>
            <person name="Trevarthen K."/>
            <person name="Funt J."/>
            <person name="Adams M.D."/>
        </authorList>
    </citation>
    <scope>NUCLEOTIDE SEQUENCE [GENOMIC DNA]</scope>
</reference>
<proteinExistence type="inferred from homology"/>
<dbReference type="EMBL" id="DQ977390">
    <property type="protein sequence ID" value="ABM92034.1"/>
    <property type="molecule type" value="Genomic_DNA"/>
</dbReference>
<dbReference type="STRING" id="9598.ENSPTRP00000015740"/>
<dbReference type="PaxDb" id="9598-ENSPTRP00000015740"/>
<dbReference type="eggNOG" id="KOG0489">
    <property type="taxonomic scope" value="Eukaryota"/>
</dbReference>
<dbReference type="InParanoid" id="A2T779"/>
<dbReference type="Proteomes" id="UP000002277">
    <property type="component" value="Unplaced"/>
</dbReference>
<dbReference type="GO" id="GO:0005737">
    <property type="term" value="C:cytoplasm"/>
    <property type="evidence" value="ECO:0000250"/>
    <property type="project" value="UniProtKB"/>
</dbReference>
<dbReference type="GO" id="GO:0005634">
    <property type="term" value="C:nucleus"/>
    <property type="evidence" value="ECO:0000250"/>
    <property type="project" value="UniProtKB"/>
</dbReference>
<dbReference type="GO" id="GO:0003700">
    <property type="term" value="F:DNA-binding transcription factor activity"/>
    <property type="evidence" value="ECO:0000250"/>
    <property type="project" value="UniProtKB"/>
</dbReference>
<dbReference type="GO" id="GO:0000981">
    <property type="term" value="F:DNA-binding transcription factor activity, RNA polymerase II-specific"/>
    <property type="evidence" value="ECO:0000318"/>
    <property type="project" value="GO_Central"/>
</dbReference>
<dbReference type="GO" id="GO:0000978">
    <property type="term" value="F:RNA polymerase II cis-regulatory region sequence-specific DNA binding"/>
    <property type="evidence" value="ECO:0000318"/>
    <property type="project" value="GO_Central"/>
</dbReference>
<dbReference type="GO" id="GO:0043565">
    <property type="term" value="F:sequence-specific DNA binding"/>
    <property type="evidence" value="ECO:0000250"/>
    <property type="project" value="UniProtKB"/>
</dbReference>
<dbReference type="GO" id="GO:0060218">
    <property type="term" value="P:hematopoietic stem cell differentiation"/>
    <property type="evidence" value="ECO:0000250"/>
    <property type="project" value="UniProtKB"/>
</dbReference>
<dbReference type="GO" id="GO:0045944">
    <property type="term" value="P:positive regulation of transcription by RNA polymerase II"/>
    <property type="evidence" value="ECO:0007669"/>
    <property type="project" value="InterPro"/>
</dbReference>
<dbReference type="GO" id="GO:0006357">
    <property type="term" value="P:regulation of transcription by RNA polymerase II"/>
    <property type="evidence" value="ECO:0000318"/>
    <property type="project" value="GO_Central"/>
</dbReference>
<dbReference type="GO" id="GO:0061056">
    <property type="term" value="P:sclerotome development"/>
    <property type="evidence" value="ECO:0000250"/>
    <property type="project" value="UniProtKB"/>
</dbReference>
<dbReference type="GO" id="GO:0061053">
    <property type="term" value="P:somite development"/>
    <property type="evidence" value="ECO:0000250"/>
    <property type="project" value="UniProtKB"/>
</dbReference>
<dbReference type="CDD" id="cd00086">
    <property type="entry name" value="homeodomain"/>
    <property type="match status" value="1"/>
</dbReference>
<dbReference type="FunFam" id="1.10.10.60:FF:000109">
    <property type="entry name" value="Homeobox protein MOX-2"/>
    <property type="match status" value="1"/>
</dbReference>
<dbReference type="Gene3D" id="1.10.10.60">
    <property type="entry name" value="Homeodomain-like"/>
    <property type="match status" value="1"/>
</dbReference>
<dbReference type="InterPro" id="IPR001356">
    <property type="entry name" value="HD"/>
</dbReference>
<dbReference type="InterPro" id="IPR020479">
    <property type="entry name" value="HD_metazoa"/>
</dbReference>
<dbReference type="InterPro" id="IPR017970">
    <property type="entry name" value="Homeobox_CS"/>
</dbReference>
<dbReference type="InterPro" id="IPR009057">
    <property type="entry name" value="Homeodomain-like_sf"/>
</dbReference>
<dbReference type="InterPro" id="IPR042634">
    <property type="entry name" value="MOX-1/MOX-2"/>
</dbReference>
<dbReference type="PANTHER" id="PTHR24328">
    <property type="entry name" value="HOMEOBOX PROTEIN MOX"/>
    <property type="match status" value="1"/>
</dbReference>
<dbReference type="PANTHER" id="PTHR24328:SF8">
    <property type="entry name" value="HOMEOBOX PROTEIN MOX-1"/>
    <property type="match status" value="1"/>
</dbReference>
<dbReference type="Pfam" id="PF00046">
    <property type="entry name" value="Homeodomain"/>
    <property type="match status" value="1"/>
</dbReference>
<dbReference type="PRINTS" id="PR00024">
    <property type="entry name" value="HOMEOBOX"/>
</dbReference>
<dbReference type="SMART" id="SM00389">
    <property type="entry name" value="HOX"/>
    <property type="match status" value="1"/>
</dbReference>
<dbReference type="SUPFAM" id="SSF46689">
    <property type="entry name" value="Homeodomain-like"/>
    <property type="match status" value="1"/>
</dbReference>
<dbReference type="PROSITE" id="PS00027">
    <property type="entry name" value="HOMEOBOX_1"/>
    <property type="match status" value="1"/>
</dbReference>
<dbReference type="PROSITE" id="PS50071">
    <property type="entry name" value="HOMEOBOX_2"/>
    <property type="match status" value="1"/>
</dbReference>
<name>MEOX1_PANTR</name>
<keyword id="KW-0010">Activator</keyword>
<keyword id="KW-0963">Cytoplasm</keyword>
<keyword id="KW-0217">Developmental protein</keyword>
<keyword id="KW-0238">DNA-binding</keyword>
<keyword id="KW-0371">Homeobox</keyword>
<keyword id="KW-0539">Nucleus</keyword>
<keyword id="KW-1185">Reference proteome</keyword>
<keyword id="KW-0678">Repressor</keyword>
<keyword id="KW-0804">Transcription</keyword>
<keyword id="KW-0805">Transcription regulation</keyword>